<feature type="chain" id="PRO_1000192301" description="Nucleoside diphosphate kinase">
    <location>
        <begin position="1"/>
        <end position="144"/>
    </location>
</feature>
<feature type="active site" description="Pros-phosphohistidine intermediate" evidence="1">
    <location>
        <position position="117"/>
    </location>
</feature>
<feature type="binding site" evidence="1">
    <location>
        <position position="11"/>
    </location>
    <ligand>
        <name>ATP</name>
        <dbReference type="ChEBI" id="CHEBI:30616"/>
    </ligand>
</feature>
<feature type="binding site" evidence="1">
    <location>
        <position position="59"/>
    </location>
    <ligand>
        <name>ATP</name>
        <dbReference type="ChEBI" id="CHEBI:30616"/>
    </ligand>
</feature>
<feature type="binding site" evidence="1">
    <location>
        <position position="87"/>
    </location>
    <ligand>
        <name>ATP</name>
        <dbReference type="ChEBI" id="CHEBI:30616"/>
    </ligand>
</feature>
<feature type="binding site" evidence="1">
    <location>
        <position position="93"/>
    </location>
    <ligand>
        <name>ATP</name>
        <dbReference type="ChEBI" id="CHEBI:30616"/>
    </ligand>
</feature>
<feature type="binding site" evidence="1">
    <location>
        <position position="104"/>
    </location>
    <ligand>
        <name>ATP</name>
        <dbReference type="ChEBI" id="CHEBI:30616"/>
    </ligand>
</feature>
<feature type="binding site" evidence="1">
    <location>
        <position position="114"/>
    </location>
    <ligand>
        <name>ATP</name>
        <dbReference type="ChEBI" id="CHEBI:30616"/>
    </ligand>
</feature>
<comment type="function">
    <text evidence="1">Major role in the synthesis of nucleoside triphosphates other than ATP. The ATP gamma phosphate is transferred to the NDP beta phosphate via a ping-pong mechanism, using a phosphorylated active-site intermediate.</text>
</comment>
<comment type="catalytic activity">
    <reaction evidence="1">
        <text>a 2'-deoxyribonucleoside 5'-diphosphate + ATP = a 2'-deoxyribonucleoside 5'-triphosphate + ADP</text>
        <dbReference type="Rhea" id="RHEA:44640"/>
        <dbReference type="ChEBI" id="CHEBI:30616"/>
        <dbReference type="ChEBI" id="CHEBI:61560"/>
        <dbReference type="ChEBI" id="CHEBI:73316"/>
        <dbReference type="ChEBI" id="CHEBI:456216"/>
        <dbReference type="EC" id="2.7.4.6"/>
    </reaction>
</comment>
<comment type="catalytic activity">
    <reaction evidence="1">
        <text>a ribonucleoside 5'-diphosphate + ATP = a ribonucleoside 5'-triphosphate + ADP</text>
        <dbReference type="Rhea" id="RHEA:18113"/>
        <dbReference type="ChEBI" id="CHEBI:30616"/>
        <dbReference type="ChEBI" id="CHEBI:57930"/>
        <dbReference type="ChEBI" id="CHEBI:61557"/>
        <dbReference type="ChEBI" id="CHEBI:456216"/>
        <dbReference type="EC" id="2.7.4.6"/>
    </reaction>
</comment>
<comment type="cofactor">
    <cofactor evidence="1">
        <name>Mg(2+)</name>
        <dbReference type="ChEBI" id="CHEBI:18420"/>
    </cofactor>
</comment>
<comment type="subunit">
    <text evidence="1">Homotetramer.</text>
</comment>
<comment type="subcellular location">
    <subcellularLocation>
        <location evidence="1">Cytoplasm</location>
    </subcellularLocation>
</comment>
<comment type="similarity">
    <text evidence="1">Belongs to the NDK family.</text>
</comment>
<accession>B7VJT4</accession>
<gene>
    <name evidence="1" type="primary">ndk</name>
    <name type="ordered locus">VS_0615</name>
</gene>
<dbReference type="EC" id="2.7.4.6" evidence="1"/>
<dbReference type="EMBL" id="FM954972">
    <property type="protein sequence ID" value="CAV17608.1"/>
    <property type="molecule type" value="Genomic_DNA"/>
</dbReference>
<dbReference type="SMR" id="B7VJT4"/>
<dbReference type="STRING" id="575788.VS_0615"/>
<dbReference type="KEGG" id="vsp:VS_0615"/>
<dbReference type="eggNOG" id="COG0105">
    <property type="taxonomic scope" value="Bacteria"/>
</dbReference>
<dbReference type="HOGENOM" id="CLU_060216_8_1_6"/>
<dbReference type="Proteomes" id="UP000009100">
    <property type="component" value="Chromosome 1"/>
</dbReference>
<dbReference type="GO" id="GO:0005737">
    <property type="term" value="C:cytoplasm"/>
    <property type="evidence" value="ECO:0007669"/>
    <property type="project" value="UniProtKB-SubCell"/>
</dbReference>
<dbReference type="GO" id="GO:0005524">
    <property type="term" value="F:ATP binding"/>
    <property type="evidence" value="ECO:0007669"/>
    <property type="project" value="UniProtKB-UniRule"/>
</dbReference>
<dbReference type="GO" id="GO:0046872">
    <property type="term" value="F:metal ion binding"/>
    <property type="evidence" value="ECO:0007669"/>
    <property type="project" value="UniProtKB-KW"/>
</dbReference>
<dbReference type="GO" id="GO:0004550">
    <property type="term" value="F:nucleoside diphosphate kinase activity"/>
    <property type="evidence" value="ECO:0007669"/>
    <property type="project" value="UniProtKB-UniRule"/>
</dbReference>
<dbReference type="GO" id="GO:0006241">
    <property type="term" value="P:CTP biosynthetic process"/>
    <property type="evidence" value="ECO:0007669"/>
    <property type="project" value="UniProtKB-UniRule"/>
</dbReference>
<dbReference type="GO" id="GO:0006183">
    <property type="term" value="P:GTP biosynthetic process"/>
    <property type="evidence" value="ECO:0007669"/>
    <property type="project" value="UniProtKB-UniRule"/>
</dbReference>
<dbReference type="GO" id="GO:0006228">
    <property type="term" value="P:UTP biosynthetic process"/>
    <property type="evidence" value="ECO:0007669"/>
    <property type="project" value="UniProtKB-UniRule"/>
</dbReference>
<dbReference type="CDD" id="cd04413">
    <property type="entry name" value="NDPk_I"/>
    <property type="match status" value="1"/>
</dbReference>
<dbReference type="FunFam" id="3.30.70.141:FF:000001">
    <property type="entry name" value="Nucleoside diphosphate kinase"/>
    <property type="match status" value="1"/>
</dbReference>
<dbReference type="Gene3D" id="3.30.70.141">
    <property type="entry name" value="Nucleoside diphosphate kinase-like domain"/>
    <property type="match status" value="1"/>
</dbReference>
<dbReference type="HAMAP" id="MF_00451">
    <property type="entry name" value="NDP_kinase"/>
    <property type="match status" value="1"/>
</dbReference>
<dbReference type="InterPro" id="IPR034907">
    <property type="entry name" value="NDK-like_dom"/>
</dbReference>
<dbReference type="InterPro" id="IPR036850">
    <property type="entry name" value="NDK-like_dom_sf"/>
</dbReference>
<dbReference type="InterPro" id="IPR001564">
    <property type="entry name" value="Nucleoside_diP_kinase"/>
</dbReference>
<dbReference type="InterPro" id="IPR023005">
    <property type="entry name" value="Nucleoside_diP_kinase_AS"/>
</dbReference>
<dbReference type="NCBIfam" id="NF001908">
    <property type="entry name" value="PRK00668.1"/>
    <property type="match status" value="1"/>
</dbReference>
<dbReference type="PANTHER" id="PTHR46161">
    <property type="entry name" value="NUCLEOSIDE DIPHOSPHATE KINASE"/>
    <property type="match status" value="1"/>
</dbReference>
<dbReference type="PANTHER" id="PTHR46161:SF3">
    <property type="entry name" value="NUCLEOSIDE DIPHOSPHATE KINASE DDB_G0292928-RELATED"/>
    <property type="match status" value="1"/>
</dbReference>
<dbReference type="Pfam" id="PF00334">
    <property type="entry name" value="NDK"/>
    <property type="match status" value="1"/>
</dbReference>
<dbReference type="PRINTS" id="PR01243">
    <property type="entry name" value="NUCDPKINASE"/>
</dbReference>
<dbReference type="SMART" id="SM00562">
    <property type="entry name" value="NDK"/>
    <property type="match status" value="1"/>
</dbReference>
<dbReference type="SUPFAM" id="SSF54919">
    <property type="entry name" value="Nucleoside diphosphate kinase, NDK"/>
    <property type="match status" value="1"/>
</dbReference>
<dbReference type="PROSITE" id="PS00469">
    <property type="entry name" value="NDPK"/>
    <property type="match status" value="1"/>
</dbReference>
<dbReference type="PROSITE" id="PS51374">
    <property type="entry name" value="NDPK_LIKE"/>
    <property type="match status" value="1"/>
</dbReference>
<sequence>MALERTFSIVKPDAVKRNLVGEIYHRIEKAGLQIIAAKMVSLTEAQASGFYAEHEGKEFFGPLKEFMTSGPIMVQVLEGENAIARYRELMGKTNPEEAACGTIRADYAISMRYNSVHGSDSPESAAREIEFFFPESEICPRPAE</sequence>
<evidence type="ECO:0000255" key="1">
    <source>
        <dbReference type="HAMAP-Rule" id="MF_00451"/>
    </source>
</evidence>
<proteinExistence type="inferred from homology"/>
<name>NDK_VIBA3</name>
<reference key="1">
    <citation type="submission" date="2009-02" db="EMBL/GenBank/DDBJ databases">
        <title>Vibrio splendidus str. LGP32 complete genome.</title>
        <authorList>
            <person name="Mazel D."/>
            <person name="Le Roux F."/>
        </authorList>
    </citation>
    <scope>NUCLEOTIDE SEQUENCE [LARGE SCALE GENOMIC DNA]</scope>
    <source>
        <strain>LGP32</strain>
    </source>
</reference>
<protein>
    <recommendedName>
        <fullName evidence="1">Nucleoside diphosphate kinase</fullName>
        <shortName evidence="1">NDK</shortName>
        <shortName evidence="1">NDP kinase</shortName>
        <ecNumber evidence="1">2.7.4.6</ecNumber>
    </recommendedName>
    <alternativeName>
        <fullName evidence="1">Nucleoside-2-P kinase</fullName>
    </alternativeName>
</protein>
<organism>
    <name type="scientific">Vibrio atlanticus (strain LGP32)</name>
    <name type="common">Vibrio splendidus (strain Mel32)</name>
    <dbReference type="NCBI Taxonomy" id="575788"/>
    <lineage>
        <taxon>Bacteria</taxon>
        <taxon>Pseudomonadati</taxon>
        <taxon>Pseudomonadota</taxon>
        <taxon>Gammaproteobacteria</taxon>
        <taxon>Vibrionales</taxon>
        <taxon>Vibrionaceae</taxon>
        <taxon>Vibrio</taxon>
    </lineage>
</organism>
<keyword id="KW-0067">ATP-binding</keyword>
<keyword id="KW-0963">Cytoplasm</keyword>
<keyword id="KW-0418">Kinase</keyword>
<keyword id="KW-0460">Magnesium</keyword>
<keyword id="KW-0479">Metal-binding</keyword>
<keyword id="KW-0546">Nucleotide metabolism</keyword>
<keyword id="KW-0547">Nucleotide-binding</keyword>
<keyword id="KW-0597">Phosphoprotein</keyword>
<keyword id="KW-0808">Transferase</keyword>